<feature type="chain" id="PRO_1000193647" description="Gamma-glutamyl phosphate reductase">
    <location>
        <begin position="1"/>
        <end position="415"/>
    </location>
</feature>
<reference key="1">
    <citation type="journal article" date="2008" name="Genome Res.">
        <title>Comparative genome analysis of Salmonella enteritidis PT4 and Salmonella gallinarum 287/91 provides insights into evolutionary and host adaptation pathways.</title>
        <authorList>
            <person name="Thomson N.R."/>
            <person name="Clayton D.J."/>
            <person name="Windhorst D."/>
            <person name="Vernikos G."/>
            <person name="Davidson S."/>
            <person name="Churcher C."/>
            <person name="Quail M.A."/>
            <person name="Stevens M."/>
            <person name="Jones M.A."/>
            <person name="Watson M."/>
            <person name="Barron A."/>
            <person name="Layton A."/>
            <person name="Pickard D."/>
            <person name="Kingsley R.A."/>
            <person name="Bignell A."/>
            <person name="Clark L."/>
            <person name="Harris B."/>
            <person name="Ormond D."/>
            <person name="Abdellah Z."/>
            <person name="Brooks K."/>
            <person name="Cherevach I."/>
            <person name="Chillingworth T."/>
            <person name="Woodward J."/>
            <person name="Norberczak H."/>
            <person name="Lord A."/>
            <person name="Arrowsmith C."/>
            <person name="Jagels K."/>
            <person name="Moule S."/>
            <person name="Mungall K."/>
            <person name="Saunders M."/>
            <person name="Whitehead S."/>
            <person name="Chabalgoity J.A."/>
            <person name="Maskell D."/>
            <person name="Humphreys T."/>
            <person name="Roberts M."/>
            <person name="Barrow P.A."/>
            <person name="Dougan G."/>
            <person name="Parkhill J."/>
        </authorList>
    </citation>
    <scope>NUCLEOTIDE SEQUENCE [LARGE SCALE GENOMIC DNA]</scope>
    <source>
        <strain>287/91 / NCTC 13346</strain>
    </source>
</reference>
<accession>B5R5R9</accession>
<keyword id="KW-0028">Amino-acid biosynthesis</keyword>
<keyword id="KW-0963">Cytoplasm</keyword>
<keyword id="KW-0521">NADP</keyword>
<keyword id="KW-0560">Oxidoreductase</keyword>
<keyword id="KW-0641">Proline biosynthesis</keyword>
<evidence type="ECO:0000255" key="1">
    <source>
        <dbReference type="HAMAP-Rule" id="MF_00412"/>
    </source>
</evidence>
<comment type="function">
    <text evidence="1">Catalyzes the NADPH-dependent reduction of L-glutamate 5-phosphate into L-glutamate 5-semialdehyde and phosphate. The product spontaneously undergoes cyclization to form 1-pyrroline-5-carboxylate.</text>
</comment>
<comment type="catalytic activity">
    <reaction evidence="1">
        <text>L-glutamate 5-semialdehyde + phosphate + NADP(+) = L-glutamyl 5-phosphate + NADPH + H(+)</text>
        <dbReference type="Rhea" id="RHEA:19541"/>
        <dbReference type="ChEBI" id="CHEBI:15378"/>
        <dbReference type="ChEBI" id="CHEBI:43474"/>
        <dbReference type="ChEBI" id="CHEBI:57783"/>
        <dbReference type="ChEBI" id="CHEBI:58066"/>
        <dbReference type="ChEBI" id="CHEBI:58274"/>
        <dbReference type="ChEBI" id="CHEBI:58349"/>
        <dbReference type="EC" id="1.2.1.41"/>
    </reaction>
</comment>
<comment type="pathway">
    <text evidence="1">Amino-acid biosynthesis; L-proline biosynthesis; L-glutamate 5-semialdehyde from L-glutamate: step 2/2.</text>
</comment>
<comment type="subcellular location">
    <subcellularLocation>
        <location evidence="1">Cytoplasm</location>
    </subcellularLocation>
</comment>
<comment type="similarity">
    <text evidence="1">Belongs to the gamma-glutamyl phosphate reductase family.</text>
</comment>
<gene>
    <name evidence="1" type="primary">proA</name>
    <name type="ordered locus">SG0333</name>
</gene>
<protein>
    <recommendedName>
        <fullName evidence="1">Gamma-glutamyl phosphate reductase</fullName>
        <shortName evidence="1">GPR</shortName>
        <ecNumber evidence="1">1.2.1.41</ecNumber>
    </recommendedName>
    <alternativeName>
        <fullName evidence="1">Glutamate-5-semialdehyde dehydrogenase</fullName>
    </alternativeName>
    <alternativeName>
        <fullName evidence="1">Glutamyl-gamma-semialdehyde dehydrogenase</fullName>
        <shortName evidence="1">GSA dehydrogenase</shortName>
    </alternativeName>
</protein>
<name>PROA_SALG2</name>
<proteinExistence type="inferred from homology"/>
<organism>
    <name type="scientific">Salmonella gallinarum (strain 287/91 / NCTC 13346)</name>
    <dbReference type="NCBI Taxonomy" id="550538"/>
    <lineage>
        <taxon>Bacteria</taxon>
        <taxon>Pseudomonadati</taxon>
        <taxon>Pseudomonadota</taxon>
        <taxon>Gammaproteobacteria</taxon>
        <taxon>Enterobacterales</taxon>
        <taxon>Enterobacteriaceae</taxon>
        <taxon>Salmonella</taxon>
    </lineage>
</organism>
<sequence length="415" mass="44597">MLEQMGIAAKAASYKLALLSSGEKNRVLEKIADELEAQMESILSANVQDVEQARANGLSEAMLDRLTLTPARLKAIADDVRQVCNLADPVGQVIDGGLLDSGLRMERRRVPLGVVGVIYEARPNVTVDVASLCLKTGNAVILRGGKETYRTNAATVRVIQKALKACGLPEAAVQAIDNPDRSLVNEMLRMDKYIDMLIPRGGAGLHKLCREQSTIPVITGGIGVCHIFVDSSADIAPALKIIVNAKTQRPSTCNTVETLLVHQDIAERFLPALSKQMAESGVTLHGDETVMQLHGPAKLVPLKPEKLDNEFLSLDLNVVVVENMDGAIAHIREHGTQHSDAILTSDMHNAARFVNEVDSAAVYVNASTRFTDGGQFGLGAEVAVSTQKLHARGPMGLEALTTYKWIGFGDGTIRA</sequence>
<dbReference type="EC" id="1.2.1.41" evidence="1"/>
<dbReference type="EMBL" id="AM933173">
    <property type="protein sequence ID" value="CAR36235.1"/>
    <property type="molecule type" value="Genomic_DNA"/>
</dbReference>
<dbReference type="RefSeq" id="WP_000893239.1">
    <property type="nucleotide sequence ID" value="NC_011274.1"/>
</dbReference>
<dbReference type="SMR" id="B5R5R9"/>
<dbReference type="KEGG" id="seg:SG0333"/>
<dbReference type="HOGENOM" id="CLU_030231_0_0_6"/>
<dbReference type="UniPathway" id="UPA00098">
    <property type="reaction ID" value="UER00360"/>
</dbReference>
<dbReference type="Proteomes" id="UP000008321">
    <property type="component" value="Chromosome"/>
</dbReference>
<dbReference type="GO" id="GO:0005737">
    <property type="term" value="C:cytoplasm"/>
    <property type="evidence" value="ECO:0007669"/>
    <property type="project" value="UniProtKB-SubCell"/>
</dbReference>
<dbReference type="GO" id="GO:0004350">
    <property type="term" value="F:glutamate-5-semialdehyde dehydrogenase activity"/>
    <property type="evidence" value="ECO:0007669"/>
    <property type="project" value="UniProtKB-UniRule"/>
</dbReference>
<dbReference type="GO" id="GO:0050661">
    <property type="term" value="F:NADP binding"/>
    <property type="evidence" value="ECO:0007669"/>
    <property type="project" value="InterPro"/>
</dbReference>
<dbReference type="GO" id="GO:0055129">
    <property type="term" value="P:L-proline biosynthetic process"/>
    <property type="evidence" value="ECO:0007669"/>
    <property type="project" value="UniProtKB-UniRule"/>
</dbReference>
<dbReference type="CDD" id="cd07079">
    <property type="entry name" value="ALDH_F18-19_ProA-GPR"/>
    <property type="match status" value="1"/>
</dbReference>
<dbReference type="FunFam" id="3.40.309.10:FF:000006">
    <property type="entry name" value="Gamma-glutamyl phosphate reductase"/>
    <property type="match status" value="1"/>
</dbReference>
<dbReference type="Gene3D" id="3.40.605.10">
    <property type="entry name" value="Aldehyde Dehydrogenase, Chain A, domain 1"/>
    <property type="match status" value="1"/>
</dbReference>
<dbReference type="Gene3D" id="3.40.309.10">
    <property type="entry name" value="Aldehyde Dehydrogenase, Chain A, domain 2"/>
    <property type="match status" value="1"/>
</dbReference>
<dbReference type="HAMAP" id="MF_00412">
    <property type="entry name" value="ProA"/>
    <property type="match status" value="1"/>
</dbReference>
<dbReference type="InterPro" id="IPR016161">
    <property type="entry name" value="Ald_DH/histidinol_DH"/>
</dbReference>
<dbReference type="InterPro" id="IPR016163">
    <property type="entry name" value="Ald_DH_C"/>
</dbReference>
<dbReference type="InterPro" id="IPR016162">
    <property type="entry name" value="Ald_DH_N"/>
</dbReference>
<dbReference type="InterPro" id="IPR015590">
    <property type="entry name" value="Aldehyde_DH_dom"/>
</dbReference>
<dbReference type="InterPro" id="IPR020593">
    <property type="entry name" value="G-glutamylP_reductase_CS"/>
</dbReference>
<dbReference type="InterPro" id="IPR012134">
    <property type="entry name" value="Glu-5-SA_DH"/>
</dbReference>
<dbReference type="InterPro" id="IPR000965">
    <property type="entry name" value="GPR_dom"/>
</dbReference>
<dbReference type="NCBIfam" id="NF001221">
    <property type="entry name" value="PRK00197.1"/>
    <property type="match status" value="1"/>
</dbReference>
<dbReference type="NCBIfam" id="TIGR00407">
    <property type="entry name" value="proA"/>
    <property type="match status" value="1"/>
</dbReference>
<dbReference type="PANTHER" id="PTHR11063:SF8">
    <property type="entry name" value="DELTA-1-PYRROLINE-5-CARBOXYLATE SYNTHASE"/>
    <property type="match status" value="1"/>
</dbReference>
<dbReference type="PANTHER" id="PTHR11063">
    <property type="entry name" value="GLUTAMATE SEMIALDEHYDE DEHYDROGENASE"/>
    <property type="match status" value="1"/>
</dbReference>
<dbReference type="Pfam" id="PF00171">
    <property type="entry name" value="Aldedh"/>
    <property type="match status" value="1"/>
</dbReference>
<dbReference type="PIRSF" id="PIRSF000151">
    <property type="entry name" value="GPR"/>
    <property type="match status" value="1"/>
</dbReference>
<dbReference type="SUPFAM" id="SSF53720">
    <property type="entry name" value="ALDH-like"/>
    <property type="match status" value="1"/>
</dbReference>
<dbReference type="PROSITE" id="PS01223">
    <property type="entry name" value="PROA"/>
    <property type="match status" value="1"/>
</dbReference>